<reference key="1">
    <citation type="journal article" date="2002" name="Environ. Microbiol.">
        <title>Complete genome sequence and comparative analysis of the metabolically versatile Pseudomonas putida KT2440.</title>
        <authorList>
            <person name="Nelson K.E."/>
            <person name="Weinel C."/>
            <person name="Paulsen I.T."/>
            <person name="Dodson R.J."/>
            <person name="Hilbert H."/>
            <person name="Martins dos Santos V.A.P."/>
            <person name="Fouts D.E."/>
            <person name="Gill S.R."/>
            <person name="Pop M."/>
            <person name="Holmes M."/>
            <person name="Brinkac L.M."/>
            <person name="Beanan M.J."/>
            <person name="DeBoy R.T."/>
            <person name="Daugherty S.C."/>
            <person name="Kolonay J.F."/>
            <person name="Madupu R."/>
            <person name="Nelson W.C."/>
            <person name="White O."/>
            <person name="Peterson J.D."/>
            <person name="Khouri H.M."/>
            <person name="Hance I."/>
            <person name="Chris Lee P."/>
            <person name="Holtzapple E.K."/>
            <person name="Scanlan D."/>
            <person name="Tran K."/>
            <person name="Moazzez A."/>
            <person name="Utterback T.R."/>
            <person name="Rizzo M."/>
            <person name="Lee K."/>
            <person name="Kosack D."/>
            <person name="Moestl D."/>
            <person name="Wedler H."/>
            <person name="Lauber J."/>
            <person name="Stjepandic D."/>
            <person name="Hoheisel J."/>
            <person name="Straetz M."/>
            <person name="Heim S."/>
            <person name="Kiewitz C."/>
            <person name="Eisen J.A."/>
            <person name="Timmis K.N."/>
            <person name="Duesterhoeft A."/>
            <person name="Tuemmler B."/>
            <person name="Fraser C.M."/>
        </authorList>
    </citation>
    <scope>NUCLEOTIDE SEQUENCE [LARGE SCALE GENOMIC DNA]</scope>
    <source>
        <strain>ATCC 47054 / DSM 6125 / CFBP 8728 / NCIMB 11950 / KT2440</strain>
    </source>
</reference>
<evidence type="ECO:0000255" key="1">
    <source>
        <dbReference type="HAMAP-Rule" id="MF_01703"/>
    </source>
</evidence>
<name>MSBA_PSEPK</name>
<organism>
    <name type="scientific">Pseudomonas putida (strain ATCC 47054 / DSM 6125 / CFBP 8728 / NCIMB 11950 / KT2440)</name>
    <dbReference type="NCBI Taxonomy" id="160488"/>
    <lineage>
        <taxon>Bacteria</taxon>
        <taxon>Pseudomonadati</taxon>
        <taxon>Pseudomonadota</taxon>
        <taxon>Gammaproteobacteria</taxon>
        <taxon>Pseudomonadales</taxon>
        <taxon>Pseudomonadaceae</taxon>
        <taxon>Pseudomonas</taxon>
    </lineage>
</organism>
<feature type="chain" id="PRO_0000092594" description="ATP-dependent lipid A-core flippase">
    <location>
        <begin position="1"/>
        <end position="602"/>
    </location>
</feature>
<feature type="transmembrane region" description="Helical" evidence="1">
    <location>
        <begin position="28"/>
        <end position="48"/>
    </location>
</feature>
<feature type="transmembrane region" description="Helical" evidence="1">
    <location>
        <begin position="84"/>
        <end position="104"/>
    </location>
</feature>
<feature type="transmembrane region" description="Helical" evidence="1">
    <location>
        <begin position="158"/>
        <end position="178"/>
    </location>
</feature>
<feature type="transmembrane region" description="Helical" evidence="1">
    <location>
        <begin position="180"/>
        <end position="200"/>
    </location>
</feature>
<feature type="transmembrane region" description="Helical" evidence="1">
    <location>
        <begin position="268"/>
        <end position="288"/>
    </location>
</feature>
<feature type="domain" description="ABC transmembrane type-1" evidence="1">
    <location>
        <begin position="32"/>
        <end position="323"/>
    </location>
</feature>
<feature type="domain" description="ABC transporter" evidence="1">
    <location>
        <begin position="355"/>
        <end position="591"/>
    </location>
</feature>
<feature type="binding site" evidence="1">
    <location>
        <begin position="389"/>
        <end position="396"/>
    </location>
    <ligand>
        <name>ATP</name>
        <dbReference type="ChEBI" id="CHEBI:30616"/>
    </ligand>
</feature>
<sequence length="602" mass="66280">MAETPRPAEHTSSLKIYFRLLSYVKPYVGIFLLSIVGFVIFASTQPMLAGILKYFVDGLSNPEAVLFPNVPYLRDLQLLQAVPLLIILIAAWQGLGSFLGNYFLAKVSLSLVHDLRVALFNKLLVLPNRYFDNHNSGHLISRITFNVTMVTGAATDAIKVVIREGLTVVFLFAYLLWMNWHLTLVMVAILPVIAVMVSIASKKFRKQSKKIQVAMGDVTHVASETIQGYRVVRSFGGEAYEQQRFGQASQSNTDKQLRMTKTGSLYTPMLQLVIYSAMAALMFLVLFLRGDSTAGDLVAYITAAGLLPKPIRQLSEVSSTIQKGLAGAESIFEQLDEAPEVDTGTVEKERVEGRLEVRNLSFTYPGTEREVLSDISFVAEPGQMIALVGRSGSGKSTLAALIPRFYHHDKGQILLDGVEIEHYRLRNLRRHVSQVTQHVTLFNDTVANNIAYGDLAGAPRADIEAAAADAYAKEFVDRLPKGFDTEVGENGVLLSGGQRQRLAIARALLKNAPLLILDEATSALDTESERHIQAALDHVMQGRTTLVIAHRLSTIEKADQILVMDQGRLVERGTHTELLAANGHYARLHAMGLDEPAKADIT</sequence>
<protein>
    <recommendedName>
        <fullName evidence="1">ATP-dependent lipid A-core flippase</fullName>
        <ecNumber evidence="1">7.5.2.6</ecNumber>
    </recommendedName>
    <alternativeName>
        <fullName evidence="1">Lipid A export ATP-binding/permease protein MsbA</fullName>
    </alternativeName>
</protein>
<keyword id="KW-0067">ATP-binding</keyword>
<keyword id="KW-0997">Cell inner membrane</keyword>
<keyword id="KW-1003">Cell membrane</keyword>
<keyword id="KW-0445">Lipid transport</keyword>
<keyword id="KW-0472">Membrane</keyword>
<keyword id="KW-0547">Nucleotide-binding</keyword>
<keyword id="KW-1185">Reference proteome</keyword>
<keyword id="KW-1278">Translocase</keyword>
<keyword id="KW-0812">Transmembrane</keyword>
<keyword id="KW-1133">Transmembrane helix</keyword>
<keyword id="KW-0813">Transport</keyword>
<gene>
    <name evidence="1" type="primary">msbA</name>
    <name type="ordered locus">PP_4935</name>
</gene>
<comment type="function">
    <text evidence="1">Involved in lipopolysaccharide (LPS) biosynthesis. Translocates lipid A-core from the inner to the outer leaflet of the inner membrane. Transmembrane domains (TMD) form a pore in the inner membrane and the ATP-binding domain (NBD) is responsible for energy generation.</text>
</comment>
<comment type="catalytic activity">
    <reaction evidence="1">
        <text>ATP + H2O + lipid A-core oligosaccharideSide 1 = ADP + phosphate + lipid A-core oligosaccharideSide 2.</text>
        <dbReference type="EC" id="7.5.2.6"/>
    </reaction>
</comment>
<comment type="subunit">
    <text evidence="1">Homodimer.</text>
</comment>
<comment type="subcellular location">
    <subcellularLocation>
        <location evidence="1">Cell inner membrane</location>
        <topology evidence="1">Multi-pass membrane protein</topology>
    </subcellularLocation>
</comment>
<comment type="domain">
    <text evidence="1">In MsbA the ATP-binding domain (NBD) and the transmembrane domain (TMD) are fused.</text>
</comment>
<comment type="similarity">
    <text evidence="1">Belongs to the ABC transporter superfamily. Lipid exporter (TC 3.A.1.106) family.</text>
</comment>
<dbReference type="EC" id="7.5.2.6" evidence="1"/>
<dbReference type="EMBL" id="AE015451">
    <property type="protein sequence ID" value="AAN70502.1"/>
    <property type="molecule type" value="Genomic_DNA"/>
</dbReference>
<dbReference type="RefSeq" id="NP_747038.1">
    <property type="nucleotide sequence ID" value="NC_002947.4"/>
</dbReference>
<dbReference type="RefSeq" id="WP_010955513.1">
    <property type="nucleotide sequence ID" value="NZ_CP169744.1"/>
</dbReference>
<dbReference type="SMR" id="Q88D92"/>
<dbReference type="STRING" id="160488.PP_4935"/>
<dbReference type="PaxDb" id="160488-PP_4935"/>
<dbReference type="GeneID" id="83682667"/>
<dbReference type="KEGG" id="ppu:PP_4935"/>
<dbReference type="PATRIC" id="fig|160488.4.peg.5269"/>
<dbReference type="eggNOG" id="COG1132">
    <property type="taxonomic scope" value="Bacteria"/>
</dbReference>
<dbReference type="HOGENOM" id="CLU_000604_84_3_6"/>
<dbReference type="OrthoDB" id="9806127at2"/>
<dbReference type="PhylomeDB" id="Q88D92"/>
<dbReference type="BioCyc" id="PPUT160488:G1G01-5278-MONOMER"/>
<dbReference type="Proteomes" id="UP000000556">
    <property type="component" value="Chromosome"/>
</dbReference>
<dbReference type="GO" id="GO:0005886">
    <property type="term" value="C:plasma membrane"/>
    <property type="evidence" value="ECO:0007669"/>
    <property type="project" value="UniProtKB-SubCell"/>
</dbReference>
<dbReference type="GO" id="GO:0015421">
    <property type="term" value="F:ABC-type oligopeptide transporter activity"/>
    <property type="evidence" value="ECO:0007669"/>
    <property type="project" value="TreeGrafter"/>
</dbReference>
<dbReference type="GO" id="GO:0005524">
    <property type="term" value="F:ATP binding"/>
    <property type="evidence" value="ECO:0007669"/>
    <property type="project" value="UniProtKB-KW"/>
</dbReference>
<dbReference type="GO" id="GO:0016887">
    <property type="term" value="F:ATP hydrolysis activity"/>
    <property type="evidence" value="ECO:0007669"/>
    <property type="project" value="InterPro"/>
</dbReference>
<dbReference type="GO" id="GO:0034040">
    <property type="term" value="F:ATPase-coupled lipid transmembrane transporter activity"/>
    <property type="evidence" value="ECO:0007669"/>
    <property type="project" value="InterPro"/>
</dbReference>
<dbReference type="CDD" id="cd18552">
    <property type="entry name" value="ABC_6TM_MsbA_like"/>
    <property type="match status" value="1"/>
</dbReference>
<dbReference type="FunFam" id="3.40.50.300:FF:000140">
    <property type="entry name" value="Lipid A export ATP-binding/permease protein MsbA"/>
    <property type="match status" value="1"/>
</dbReference>
<dbReference type="Gene3D" id="1.20.1560.10">
    <property type="entry name" value="ABC transporter type 1, transmembrane domain"/>
    <property type="match status" value="1"/>
</dbReference>
<dbReference type="Gene3D" id="3.40.50.300">
    <property type="entry name" value="P-loop containing nucleotide triphosphate hydrolases"/>
    <property type="match status" value="1"/>
</dbReference>
<dbReference type="InterPro" id="IPR003593">
    <property type="entry name" value="AAA+_ATPase"/>
</dbReference>
<dbReference type="InterPro" id="IPR011527">
    <property type="entry name" value="ABC1_TM_dom"/>
</dbReference>
<dbReference type="InterPro" id="IPR036640">
    <property type="entry name" value="ABC1_TM_sf"/>
</dbReference>
<dbReference type="InterPro" id="IPR003439">
    <property type="entry name" value="ABC_transporter-like_ATP-bd"/>
</dbReference>
<dbReference type="InterPro" id="IPR017871">
    <property type="entry name" value="ABC_transporter-like_CS"/>
</dbReference>
<dbReference type="InterPro" id="IPR011917">
    <property type="entry name" value="ABC_transpr_lipidA"/>
</dbReference>
<dbReference type="InterPro" id="IPR027417">
    <property type="entry name" value="P-loop_NTPase"/>
</dbReference>
<dbReference type="InterPro" id="IPR039421">
    <property type="entry name" value="Type_1_exporter"/>
</dbReference>
<dbReference type="NCBIfam" id="TIGR02203">
    <property type="entry name" value="MsbA_lipidA"/>
    <property type="match status" value="1"/>
</dbReference>
<dbReference type="PANTHER" id="PTHR43394:SF1">
    <property type="entry name" value="ATP-BINDING CASSETTE SUB-FAMILY B MEMBER 10, MITOCHONDRIAL"/>
    <property type="match status" value="1"/>
</dbReference>
<dbReference type="PANTHER" id="PTHR43394">
    <property type="entry name" value="ATP-DEPENDENT PERMEASE MDL1, MITOCHONDRIAL"/>
    <property type="match status" value="1"/>
</dbReference>
<dbReference type="Pfam" id="PF00664">
    <property type="entry name" value="ABC_membrane"/>
    <property type="match status" value="1"/>
</dbReference>
<dbReference type="Pfam" id="PF00005">
    <property type="entry name" value="ABC_tran"/>
    <property type="match status" value="1"/>
</dbReference>
<dbReference type="SMART" id="SM00382">
    <property type="entry name" value="AAA"/>
    <property type="match status" value="1"/>
</dbReference>
<dbReference type="SUPFAM" id="SSF90123">
    <property type="entry name" value="ABC transporter transmembrane region"/>
    <property type="match status" value="1"/>
</dbReference>
<dbReference type="SUPFAM" id="SSF52540">
    <property type="entry name" value="P-loop containing nucleoside triphosphate hydrolases"/>
    <property type="match status" value="1"/>
</dbReference>
<dbReference type="PROSITE" id="PS50929">
    <property type="entry name" value="ABC_TM1F"/>
    <property type="match status" value="1"/>
</dbReference>
<dbReference type="PROSITE" id="PS00211">
    <property type="entry name" value="ABC_TRANSPORTER_1"/>
    <property type="match status" value="1"/>
</dbReference>
<dbReference type="PROSITE" id="PS50893">
    <property type="entry name" value="ABC_TRANSPORTER_2"/>
    <property type="match status" value="1"/>
</dbReference>
<dbReference type="PROSITE" id="PS51239">
    <property type="entry name" value="MSBA"/>
    <property type="match status" value="1"/>
</dbReference>
<proteinExistence type="inferred from homology"/>
<accession>Q88D92</accession>